<reference key="1">
    <citation type="journal article" date="2006" name="J. Biol. Chem.">
        <title>Evolution of the primate cathelicidin. Correlation between structural variations and antimicrobial activity.</title>
        <authorList>
            <person name="Zelezetsky I."/>
            <person name="Pontillo A."/>
            <person name="Puzzi L."/>
            <person name="Antcheva N."/>
            <person name="Segat L."/>
            <person name="Pacor S."/>
            <person name="Crovella S."/>
            <person name="Tossi A."/>
        </authorList>
    </citation>
    <scope>NUCLEOTIDE SEQUENCE [GENOMIC DNA]</scope>
</reference>
<protein>
    <recommendedName>
        <fullName evidence="1">Cathelicidin antimicrobial peptide</fullName>
    </recommendedName>
    <component>
        <recommendedName>
            <fullName evidence="1">Antibacterial peptide FALL-39</fullName>
        </recommendedName>
        <alternativeName>
            <fullName evidence="1">FALL-39 peptide antibiotic</fullName>
        </alternativeName>
    </component>
    <component>
        <recommendedName>
            <fullName evidence="1">Antibacterial peptide LL-37</fullName>
        </recommendedName>
    </component>
</protein>
<accession>Q1KLX6</accession>
<gene>
    <name evidence="1" type="primary">CAMP</name>
</gene>
<keyword id="KW-0044">Antibiotic</keyword>
<keyword id="KW-0929">Antimicrobial</keyword>
<keyword id="KW-0165">Cleavage on pair of basic residues</keyword>
<keyword id="KW-1015">Disulfide bond</keyword>
<keyword id="KW-0391">Immunity</keyword>
<keyword id="KW-0399">Innate immunity</keyword>
<keyword id="KW-0964">Secreted</keyword>
<keyword id="KW-0732">Signal</keyword>
<sequence>MKTQRDSPSLGRWSLVLLLLGLVMPLAIVAQVLSYQEAVLRAIDGINQRSSDANLYRLLDLDPRPTMDGDPDTPKPVSFTVKETVCPRTTQKSPEDCDFKEDGLVKRCVGTVILNQARDSFDISCDKDNRRSARLGNFFRKVKEKIGGGLKKVGQKIKDFLGNLVPRTAS</sequence>
<feature type="signal peptide" evidence="3">
    <location>
        <begin position="1"/>
        <end position="30"/>
    </location>
</feature>
<feature type="propeptide" id="PRO_0000251770" description="Cathelin-like domain (CLD)" evidence="1">
    <location>
        <begin position="31"/>
        <end position="131"/>
    </location>
</feature>
<feature type="peptide" id="PRO_0000251771" description="Antibacterial peptide FALL-39" evidence="1">
    <location>
        <begin position="132"/>
        <end position="170"/>
    </location>
</feature>
<feature type="peptide" id="PRO_0000251772" description="Antibacterial peptide LL-37" evidence="1">
    <location>
        <begin position="134"/>
        <end position="170"/>
    </location>
</feature>
<feature type="region of interest" description="Active core" evidence="1">
    <location>
        <begin position="150"/>
        <end position="162"/>
    </location>
</feature>
<feature type="disulfide bond" evidence="1">
    <location>
        <begin position="86"/>
        <end position="97"/>
    </location>
</feature>
<feature type="disulfide bond" evidence="1">
    <location>
        <begin position="108"/>
        <end position="125"/>
    </location>
</feature>
<proteinExistence type="inferred from homology"/>
<dbReference type="EMBL" id="DQ471366">
    <property type="protein sequence ID" value="ABE96630.1"/>
    <property type="molecule type" value="Genomic_DNA"/>
</dbReference>
<dbReference type="SMR" id="Q1KLX6"/>
<dbReference type="GO" id="GO:0005615">
    <property type="term" value="C:extracellular space"/>
    <property type="evidence" value="ECO:0007669"/>
    <property type="project" value="TreeGrafter"/>
</dbReference>
<dbReference type="GO" id="GO:0031982">
    <property type="term" value="C:vesicle"/>
    <property type="evidence" value="ECO:0007669"/>
    <property type="project" value="UniProtKB-SubCell"/>
</dbReference>
<dbReference type="GO" id="GO:0001530">
    <property type="term" value="F:lipopolysaccharide binding"/>
    <property type="evidence" value="ECO:0007669"/>
    <property type="project" value="TreeGrafter"/>
</dbReference>
<dbReference type="GO" id="GO:0061844">
    <property type="term" value="P:antimicrobial humoral immune response mediated by antimicrobial peptide"/>
    <property type="evidence" value="ECO:0007669"/>
    <property type="project" value="TreeGrafter"/>
</dbReference>
<dbReference type="GO" id="GO:0050829">
    <property type="term" value="P:defense response to Gram-negative bacterium"/>
    <property type="evidence" value="ECO:0007669"/>
    <property type="project" value="TreeGrafter"/>
</dbReference>
<dbReference type="GO" id="GO:0050830">
    <property type="term" value="P:defense response to Gram-positive bacterium"/>
    <property type="evidence" value="ECO:0007669"/>
    <property type="project" value="TreeGrafter"/>
</dbReference>
<dbReference type="GO" id="GO:0045087">
    <property type="term" value="P:innate immune response"/>
    <property type="evidence" value="ECO:0007669"/>
    <property type="project" value="UniProtKB-KW"/>
</dbReference>
<dbReference type="GO" id="GO:0042119">
    <property type="term" value="P:neutrophil activation"/>
    <property type="evidence" value="ECO:0000250"/>
    <property type="project" value="UniProtKB"/>
</dbReference>
<dbReference type="FunFam" id="3.10.450.10:FF:000003">
    <property type="entry name" value="Cathelicidin antimicrobial peptide"/>
    <property type="match status" value="1"/>
</dbReference>
<dbReference type="Gene3D" id="3.10.450.10">
    <property type="match status" value="1"/>
</dbReference>
<dbReference type="InterPro" id="IPR001894">
    <property type="entry name" value="Cathelicidin-like"/>
</dbReference>
<dbReference type="InterPro" id="IPR018216">
    <property type="entry name" value="Cathelicidin_CS"/>
</dbReference>
<dbReference type="InterPro" id="IPR022746">
    <property type="entry name" value="Cathlecidin_C"/>
</dbReference>
<dbReference type="InterPro" id="IPR046350">
    <property type="entry name" value="Cystatin_sf"/>
</dbReference>
<dbReference type="PANTHER" id="PTHR10206">
    <property type="entry name" value="CATHELICIDIN"/>
    <property type="match status" value="1"/>
</dbReference>
<dbReference type="PANTHER" id="PTHR10206:SF2">
    <property type="entry name" value="CATHELICIDIN ANTIMICROBIAL PEPTIDE"/>
    <property type="match status" value="1"/>
</dbReference>
<dbReference type="Pfam" id="PF12153">
    <property type="entry name" value="CAP18_C"/>
    <property type="match status" value="1"/>
</dbReference>
<dbReference type="Pfam" id="PF00666">
    <property type="entry name" value="Cathelicidins"/>
    <property type="match status" value="1"/>
</dbReference>
<dbReference type="SUPFAM" id="SSF54403">
    <property type="entry name" value="Cystatin/monellin"/>
    <property type="match status" value="1"/>
</dbReference>
<dbReference type="PROSITE" id="PS00946">
    <property type="entry name" value="CATHELICIDINS_1"/>
    <property type="match status" value="1"/>
</dbReference>
<dbReference type="PROSITE" id="PS00947">
    <property type="entry name" value="CATHELICIDINS_2"/>
    <property type="match status" value="1"/>
</dbReference>
<organism>
    <name type="scientific">Macaca tonkeana</name>
    <name type="common">Tonkean macaque</name>
    <dbReference type="NCBI Taxonomy" id="40843"/>
    <lineage>
        <taxon>Eukaryota</taxon>
        <taxon>Metazoa</taxon>
        <taxon>Chordata</taxon>
        <taxon>Craniata</taxon>
        <taxon>Vertebrata</taxon>
        <taxon>Euteleostomi</taxon>
        <taxon>Mammalia</taxon>
        <taxon>Eutheria</taxon>
        <taxon>Euarchontoglires</taxon>
        <taxon>Primates</taxon>
        <taxon>Haplorrhini</taxon>
        <taxon>Catarrhini</taxon>
        <taxon>Cercopithecidae</taxon>
        <taxon>Cercopithecinae</taxon>
        <taxon>Macaca</taxon>
    </lineage>
</organism>
<evidence type="ECO:0000250" key="1">
    <source>
        <dbReference type="UniProtKB" id="P49913"/>
    </source>
</evidence>
<evidence type="ECO:0000250" key="2">
    <source>
        <dbReference type="UniProtKB" id="P54229"/>
    </source>
</evidence>
<evidence type="ECO:0000255" key="3"/>
<evidence type="ECO:0000305" key="4"/>
<comment type="function">
    <text evidence="1">Antimicrobial protein that is an integral component of the innate immune system (By similarity). Binds to bacterial lipopolysaccharides (LPS) (By similarity). Acts via neutrophil N-formyl peptide receptors to enhance the release of CXCL2 (By similarity). Postsecretory processing generates multiple cathelicidin antimicrobial peptides with various lengths which act as a topical antimicrobial defense in sweat on skin (By similarity). The unprocessed precursor form, cathelicidin antimicrobial peptide, inhibits the growth of Gram-negative E.coli and E.aerogenes with efficiencies comparable to that of the mature peptide LL-37 (in vitro) (By similarity).</text>
</comment>
<comment type="function">
    <molecule>Antibacterial peptide LL-37</molecule>
    <text evidence="1">Antimicrobial peptide that is an integral component of the innate immune system (By similarity). Binds to bacterial lipopolysaccharides (LPS) (By similarity). Causes membrane permeabilization by forming transmembrane pores (in vitro) (By similarity). Causes lysis of E.coli (By similarity). Exhibits antimicrobial activity against Gram-negative bacteria such as P.aeruginosa, S.typhimurium, E.aerogenes, E.coli and P.syringae, Gram-positive bacteria such as L.monocytogenes, S.epidermidis, S.pyogenes and S.aureus, as well as vancomycin-resistant enterococci (in vitro) (By similarity). Exhibits antimicrobial activity against methicillin-resistant S.aureus, P.mirabilis, and C.albicans in low-salt media, but not in media containing 100 mM NaCl (in vitro) (By similarity). Forms chiral supramolecular assemblies with quinolone signal (PQS) molecules of P.aeruginosa, which may lead to interference of bacterial quorum signaling and perturbance of bacterial biofilm formation (By similarity). May form supramolecular fiber-like assemblies on bacterial membranes (By similarity). Induces cytokine and chemokine producation as well as TNF/TNFA and CSF2/GMCSF production in normal human keratinocytes (By similarity). Exhibits hemolytic activity against red blood cells (By similarity).</text>
</comment>
<comment type="function">
    <molecule>Antibacterial peptide FALL-39</molecule>
    <text evidence="1">Exhibits antimicrobial activity against E.coli and B.megaterium (in vitro).</text>
</comment>
<comment type="subunit">
    <molecule>Antibacterial peptide LL-37</molecule>
    <text evidence="1">Monomer, homodimer or homotrimer (in vitro) (By similarity). Oligomerizes as tetra- or hexamer in solution (in vitro) (By similarity).</text>
</comment>
<comment type="subcellular location">
    <subcellularLocation>
        <location evidence="2">Secreted</location>
    </subcellularLocation>
    <subcellularLocation>
        <location evidence="2">Vesicle</location>
    </subcellularLocation>
    <text evidence="2">Stored as pro-peptide in granules and phagolysosomes of neutrophils (By similarity). Secreted in sweat onto skin (By similarity).</text>
</comment>
<comment type="domain">
    <text evidence="2">The cathelin-like domain (CLD), which is the propeptide part, does not seem to exhibit auto-inhibitory function, as it does not inhibit the antibacterial activity of antibacterial peptide LL-37.</text>
</comment>
<comment type="domain">
    <molecule>Antibacterial peptide LL-37</molecule>
    <text evidence="2">Undergoes conformational change in the presence of lipid A, transitioning from a random coil to an alpha-helical structure.</text>
</comment>
<comment type="domain">
    <molecule>Antibacterial peptide LL-37</molecule>
    <text evidence="2">Residues 17-29 of LL-37 represent the active core of the antimicrobial peptide. Forms ribbon-like fibrils and exhibits antibacterial activity against Gram-positive M.luteus (By similarity). Also exhibits antibacterial activity against Gram-negative E.coli and P.fluorescens (By similarity).</text>
</comment>
<comment type="PTM">
    <text evidence="1">Proteolytically cleaved by proteinase PRTN3 into antibacterial peptide LL-37 (By similarity). Proteolytically cleaved by cathepsin CTSG and neutrophil elastase ELANE (By similarity).</text>
</comment>
<comment type="PTM">
    <molecule>Antibacterial peptide LL-37</molecule>
    <text evidence="1">Resistant to proteolytic degradation in solution, and when bound to both zwitterionic (mimicking mammalian membranes) and negatively charged membranes (mimicking bacterial membranes).</text>
</comment>
<comment type="PTM">
    <text evidence="1">After secretion onto the skin surface, the CAMP gene product is processed by a serine protease-dependent mechanism into multiple novel antimicrobial peptides distinct from and shorter than cathelicidin LL-37 (By similarity). These peptides show enhanced antimicrobial action, acquiring the ability to kill skin pathogens such as S.aureus, E.coli and C.albicans. These peptides have lost the ability to stimulate CXCL8/IL8 release from keratinocytes (By similarity). The peptides act synergistically, killing bacteria at lower concentrations when present together, and maintain activity at increased salt condition (By similarity).</text>
</comment>
<comment type="similarity">
    <text evidence="4">Belongs to the cathelicidin family.</text>
</comment>
<name>CAMP_MACTO</name>